<reference key="1">
    <citation type="submission" date="2005-09" db="EMBL/GenBank/DDBJ databases">
        <title>Annotation of the Aspergillus terreus NIH2624 genome.</title>
        <authorList>
            <person name="Birren B.W."/>
            <person name="Lander E.S."/>
            <person name="Galagan J.E."/>
            <person name="Nusbaum C."/>
            <person name="Devon K."/>
            <person name="Henn M."/>
            <person name="Ma L.-J."/>
            <person name="Jaffe D.B."/>
            <person name="Butler J."/>
            <person name="Alvarez P."/>
            <person name="Gnerre S."/>
            <person name="Grabherr M."/>
            <person name="Kleber M."/>
            <person name="Mauceli E.W."/>
            <person name="Brockman W."/>
            <person name="Rounsley S."/>
            <person name="Young S.K."/>
            <person name="LaButti K."/>
            <person name="Pushparaj V."/>
            <person name="DeCaprio D."/>
            <person name="Crawford M."/>
            <person name="Koehrsen M."/>
            <person name="Engels R."/>
            <person name="Montgomery P."/>
            <person name="Pearson M."/>
            <person name="Howarth C."/>
            <person name="Larson L."/>
            <person name="Luoma S."/>
            <person name="White J."/>
            <person name="Alvarado L."/>
            <person name="Kodira C.D."/>
            <person name="Zeng Q."/>
            <person name="Oleary S."/>
            <person name="Yandava C."/>
            <person name="Denning D.W."/>
            <person name="Nierman W.C."/>
            <person name="Milne T."/>
            <person name="Madden K."/>
        </authorList>
    </citation>
    <scope>NUCLEOTIDE SEQUENCE [LARGE SCALE GENOMIC DNA]</scope>
    <source>
        <strain>NIH 2624 / FGSC A1156</strain>
    </source>
</reference>
<gene>
    <name type="primary">nip1</name>
    <name type="ORF">ATEG_02204</name>
</gene>
<organism>
    <name type="scientific">Aspergillus terreus (strain NIH 2624 / FGSC A1156)</name>
    <dbReference type="NCBI Taxonomy" id="341663"/>
    <lineage>
        <taxon>Eukaryota</taxon>
        <taxon>Fungi</taxon>
        <taxon>Dikarya</taxon>
        <taxon>Ascomycota</taxon>
        <taxon>Pezizomycotina</taxon>
        <taxon>Eurotiomycetes</taxon>
        <taxon>Eurotiomycetidae</taxon>
        <taxon>Eurotiales</taxon>
        <taxon>Aspergillaceae</taxon>
        <taxon>Aspergillus</taxon>
        <taxon>Aspergillus subgen. Circumdati</taxon>
    </lineage>
</organism>
<protein>
    <recommendedName>
        <fullName evidence="1">Eukaryotic translation initiation factor 3 subunit C</fullName>
        <shortName evidence="1">eIF3c</shortName>
    </recommendedName>
    <alternativeName>
        <fullName evidence="1">Eukaryotic translation initiation factor 3 93 kDa subunit homolog</fullName>
        <shortName evidence="1">eIF3 p93</shortName>
    </alternativeName>
    <alternativeName>
        <fullName evidence="1">Translation initiation factor eIF3, p93 subunit homolog</fullName>
    </alternativeName>
</protein>
<comment type="function">
    <text evidence="1">Component of the eukaryotic translation initiation factor 3 (eIF-3) complex, which is involved in protein synthesis of a specialized repertoire of mRNAs and, together with other initiation factors, stimulates binding of mRNA and methionyl-tRNAi to the 40S ribosome. The eIF-3 complex specifically targets and initiates translation of a subset of mRNAs involved in cell proliferation.</text>
</comment>
<comment type="subunit">
    <text evidence="1">Component of the eukaryotic translation initiation factor 3 (eIF-3) complex.</text>
</comment>
<comment type="subcellular location">
    <subcellularLocation>
        <location evidence="1">Cytoplasm</location>
    </subcellularLocation>
</comment>
<comment type="similarity">
    <text evidence="1">Belongs to the eIF-3 subunit C family.</text>
</comment>
<keyword id="KW-0963">Cytoplasm</keyword>
<keyword id="KW-0396">Initiation factor</keyword>
<keyword id="KW-0648">Protein biosynthesis</keyword>
<keyword id="KW-1185">Reference proteome</keyword>
<feature type="chain" id="PRO_0000364277" description="Eukaryotic translation initiation factor 3 subunit C">
    <location>
        <begin position="1"/>
        <end position="864"/>
    </location>
</feature>
<feature type="domain" description="PCI" evidence="2">
    <location>
        <begin position="602"/>
        <end position="776"/>
    </location>
</feature>
<feature type="region of interest" description="Disordered" evidence="3">
    <location>
        <begin position="1"/>
        <end position="77"/>
    </location>
</feature>
<feature type="region of interest" description="Disordered" evidence="3">
    <location>
        <begin position="815"/>
        <end position="864"/>
    </location>
</feature>
<feature type="compositionally biased region" description="Acidic residues" evidence="3">
    <location>
        <begin position="14"/>
        <end position="54"/>
    </location>
</feature>
<feature type="compositionally biased region" description="Gly residues" evidence="3">
    <location>
        <begin position="820"/>
        <end position="864"/>
    </location>
</feature>
<name>EIF3C_ASPTN</name>
<evidence type="ECO:0000255" key="1">
    <source>
        <dbReference type="HAMAP-Rule" id="MF_03002"/>
    </source>
</evidence>
<evidence type="ECO:0000255" key="2">
    <source>
        <dbReference type="PROSITE-ProRule" id="PRU01185"/>
    </source>
</evidence>
<evidence type="ECO:0000256" key="3">
    <source>
        <dbReference type="SAM" id="MobiDB-lite"/>
    </source>
</evidence>
<proteinExistence type="inferred from homology"/>
<sequence>MSRFFARGGSDSESSSEDEQELYSDREEEEQFSDSEEESSEAESSEEESSDDEGAGASRFLKNVSESEESEDEERVTVVKSAKDKRLDELEGIIKAIENAEKINDWAVISSEFDKLNRQIVKVTQAGPTPKIYIQTVADLEDFVNETIAKQKSSNKKMNASNAKGFNAVKQRIKKNNKEYATLIEKYRADKDGFMAGGDEEPKPVISAPRISKVERVEAPVAVTATADDDGFATVGRGGKTLQYTPESILKHLRVIVESRGKKNTDRFEQIRTMEKLLEVAQNPYQRIRIYLTLISTRFDLTSSSSANYMSVDQWKLAQQEFSTLLSVLESNREYVVTEGAEEWEDDEKQPQVAAGETLHVPGSIVSYVERLDDELTRSLQQIDPHTAEYIERLSDEKELYTNLVRTQVYAEALTTSEKSDPRQDSLNRVIMRRLEHIYFKPAQVVTILEEGTWKSLPSNLASDITPRANSGEVTSLVQTLCNYLFRHSDGILRARAMLCQIYFLALHDQYYRSRDLMLMSHLTENIANFDVSTQILFNRTLVQIGLCAFRAGLVYEAQNTLSEVCGSGRQKELLAQGIILQRYSTVSPEQERLERQRQLPFHMHINLELLECIYLTSSMFLEVPLMAQTSSSPEMKRRVISKTFRRMLDYNERQVFTGPAENTRDGVIMSAKFLAAGDWKKAAEMLNSIKIWDLMPQPEKIKEMLSQQIQEEGLRTYLFTYAPFYDSVSIATLSNMFELPEKKIQAIISRMISHEELAAALDQVNNAIVFRKGVELSRLQSQIVTLADKSMNLLEANEKTLEQRTQGMANAFQRDQGAGARGGRGAGRGGQARGGPRFPGGQQGRRPGGQQFSGGALGGAIKA</sequence>
<dbReference type="EMBL" id="CH476596">
    <property type="protein sequence ID" value="EAU37166.1"/>
    <property type="molecule type" value="Genomic_DNA"/>
</dbReference>
<dbReference type="RefSeq" id="XP_001211382.1">
    <property type="nucleotide sequence ID" value="XM_001211382.1"/>
</dbReference>
<dbReference type="SMR" id="Q0CVT0"/>
<dbReference type="STRING" id="341663.Q0CVT0"/>
<dbReference type="EnsemblFungi" id="EAU37166">
    <property type="protein sequence ID" value="EAU37166"/>
    <property type="gene ID" value="ATEG_02204"/>
</dbReference>
<dbReference type="GeneID" id="4316925"/>
<dbReference type="VEuPathDB" id="FungiDB:ATEG_02204"/>
<dbReference type="eggNOG" id="KOG1076">
    <property type="taxonomic scope" value="Eukaryota"/>
</dbReference>
<dbReference type="HOGENOM" id="CLU_004304_0_2_1"/>
<dbReference type="OMA" id="FRCGLIK"/>
<dbReference type="OrthoDB" id="29647at2759"/>
<dbReference type="Proteomes" id="UP000007963">
    <property type="component" value="Unassembled WGS sequence"/>
</dbReference>
<dbReference type="GO" id="GO:0010494">
    <property type="term" value="C:cytoplasmic stress granule"/>
    <property type="evidence" value="ECO:0007669"/>
    <property type="project" value="EnsemblFungi"/>
</dbReference>
<dbReference type="GO" id="GO:0016282">
    <property type="term" value="C:eukaryotic 43S preinitiation complex"/>
    <property type="evidence" value="ECO:0007669"/>
    <property type="project" value="UniProtKB-UniRule"/>
</dbReference>
<dbReference type="GO" id="GO:0033290">
    <property type="term" value="C:eukaryotic 48S preinitiation complex"/>
    <property type="evidence" value="ECO:0007669"/>
    <property type="project" value="UniProtKB-UniRule"/>
</dbReference>
<dbReference type="GO" id="GO:0071540">
    <property type="term" value="C:eukaryotic translation initiation factor 3 complex, eIF3e"/>
    <property type="evidence" value="ECO:0007669"/>
    <property type="project" value="EnsemblFungi"/>
</dbReference>
<dbReference type="GO" id="GO:0071541">
    <property type="term" value="C:eukaryotic translation initiation factor 3 complex, eIF3m"/>
    <property type="evidence" value="ECO:0007669"/>
    <property type="project" value="EnsemblFungi"/>
</dbReference>
<dbReference type="GO" id="GO:0043614">
    <property type="term" value="C:multi-eIF complex"/>
    <property type="evidence" value="ECO:0007669"/>
    <property type="project" value="EnsemblFungi"/>
</dbReference>
<dbReference type="GO" id="GO:0003723">
    <property type="term" value="F:RNA binding"/>
    <property type="evidence" value="ECO:0007669"/>
    <property type="project" value="InterPro"/>
</dbReference>
<dbReference type="GO" id="GO:0003743">
    <property type="term" value="F:translation initiation factor activity"/>
    <property type="evidence" value="ECO:0007669"/>
    <property type="project" value="UniProtKB-UniRule"/>
</dbReference>
<dbReference type="GO" id="GO:0031369">
    <property type="term" value="F:translation initiation factor binding"/>
    <property type="evidence" value="ECO:0007669"/>
    <property type="project" value="EnsemblFungi"/>
</dbReference>
<dbReference type="GO" id="GO:0001732">
    <property type="term" value="P:formation of cytoplasmic translation initiation complex"/>
    <property type="evidence" value="ECO:0007669"/>
    <property type="project" value="UniProtKB-UniRule"/>
</dbReference>
<dbReference type="FunFam" id="1.10.10.10:FF:000300">
    <property type="entry name" value="Eukaryotic translation initiation factor 3 subunit C"/>
    <property type="match status" value="1"/>
</dbReference>
<dbReference type="Gene3D" id="1.10.10.10">
    <property type="entry name" value="Winged helix-like DNA-binding domain superfamily/Winged helix DNA-binding domain"/>
    <property type="match status" value="1"/>
</dbReference>
<dbReference type="HAMAP" id="MF_03002">
    <property type="entry name" value="eIF3c"/>
    <property type="match status" value="1"/>
</dbReference>
<dbReference type="InterPro" id="IPR027516">
    <property type="entry name" value="EIF3C"/>
</dbReference>
<dbReference type="InterPro" id="IPR008905">
    <property type="entry name" value="EIF3C_N_dom"/>
</dbReference>
<dbReference type="InterPro" id="IPR000717">
    <property type="entry name" value="PCI_dom"/>
</dbReference>
<dbReference type="InterPro" id="IPR036388">
    <property type="entry name" value="WH-like_DNA-bd_sf"/>
</dbReference>
<dbReference type="InterPro" id="IPR036390">
    <property type="entry name" value="WH_DNA-bd_sf"/>
</dbReference>
<dbReference type="PANTHER" id="PTHR13937">
    <property type="entry name" value="EUKARYOTIC TRANSLATION INITATION FACTOR 3, SUBUNIT 8 EIF3S8 -RELATED"/>
    <property type="match status" value="1"/>
</dbReference>
<dbReference type="PANTHER" id="PTHR13937:SF0">
    <property type="entry name" value="EUKARYOTIC TRANSLATION INITIATION FACTOR 3 SUBUNIT C-RELATED"/>
    <property type="match status" value="1"/>
</dbReference>
<dbReference type="Pfam" id="PF05470">
    <property type="entry name" value="eIF-3c_N"/>
    <property type="match status" value="1"/>
</dbReference>
<dbReference type="Pfam" id="PF01399">
    <property type="entry name" value="PCI"/>
    <property type="match status" value="1"/>
</dbReference>
<dbReference type="SMART" id="SM00088">
    <property type="entry name" value="PINT"/>
    <property type="match status" value="1"/>
</dbReference>
<dbReference type="SUPFAM" id="SSF46785">
    <property type="entry name" value="Winged helix' DNA-binding domain"/>
    <property type="match status" value="1"/>
</dbReference>
<dbReference type="PROSITE" id="PS50250">
    <property type="entry name" value="PCI"/>
    <property type="match status" value="1"/>
</dbReference>
<accession>Q0CVT0</accession>